<keyword id="KW-0227">DNA damage</keyword>
<keyword id="KW-0233">DNA recombination</keyword>
<keyword id="KW-0234">DNA repair</keyword>
<keyword id="KW-0479">Metal-binding</keyword>
<keyword id="KW-0862">Zinc</keyword>
<keyword id="KW-0863">Zinc-finger</keyword>
<accession>C6DB85</accession>
<organism>
    <name type="scientific">Pectobacterium carotovorum subsp. carotovorum (strain PC1)</name>
    <dbReference type="NCBI Taxonomy" id="561230"/>
    <lineage>
        <taxon>Bacteria</taxon>
        <taxon>Pseudomonadati</taxon>
        <taxon>Pseudomonadota</taxon>
        <taxon>Gammaproteobacteria</taxon>
        <taxon>Enterobacterales</taxon>
        <taxon>Pectobacteriaceae</taxon>
        <taxon>Pectobacterium</taxon>
    </lineage>
</organism>
<evidence type="ECO:0000255" key="1">
    <source>
        <dbReference type="HAMAP-Rule" id="MF_00017"/>
    </source>
</evidence>
<comment type="function">
    <text evidence="1">May play a role in DNA repair. It seems to be involved in an RecBC-independent recombinational process of DNA repair. It may act with RecF and RecO.</text>
</comment>
<comment type="similarity">
    <text evidence="1">Belongs to the RecR family.</text>
</comment>
<gene>
    <name evidence="1" type="primary">recR</name>
    <name type="ordered locus">PC1_1078</name>
</gene>
<reference key="1">
    <citation type="submission" date="2009-07" db="EMBL/GenBank/DDBJ databases">
        <title>Complete sequence of Pectobacterium carotovorum subsp. carotovorum PC1.</title>
        <authorList>
            <consortium name="US DOE Joint Genome Institute"/>
            <person name="Lucas S."/>
            <person name="Copeland A."/>
            <person name="Lapidus A."/>
            <person name="Glavina del Rio T."/>
            <person name="Tice H."/>
            <person name="Bruce D."/>
            <person name="Goodwin L."/>
            <person name="Pitluck S."/>
            <person name="Munk A.C."/>
            <person name="Brettin T."/>
            <person name="Detter J.C."/>
            <person name="Han C."/>
            <person name="Tapia R."/>
            <person name="Larimer F."/>
            <person name="Land M."/>
            <person name="Hauser L."/>
            <person name="Kyrpides N."/>
            <person name="Mikhailova N."/>
            <person name="Balakrishnan V."/>
            <person name="Glasner J."/>
            <person name="Perna N.T."/>
        </authorList>
    </citation>
    <scope>NUCLEOTIDE SEQUENCE [LARGE SCALE GENOMIC DNA]</scope>
    <source>
        <strain>PC1</strain>
    </source>
</reference>
<sequence length="201" mass="21705">MQTSPLLESLMEALRCLPGVGPKSAQRMAFQLLQRNRSGGMRLAQALTRAMSEIGHCSDCRTFTEQDVCAICSNPRRQQNGQICVVESPADIHAIEQTGQFAGRYFVLMGHLSPLDGIGPDDIGLGRLEERLQVESISEVILATNPTVEGDATANYIAELCAQHGVMASRIAHGVPVGGELEMVDGTTLSHSLAGRQPFRF</sequence>
<proteinExistence type="inferred from homology"/>
<name>RECR_PECCP</name>
<dbReference type="EMBL" id="CP001657">
    <property type="protein sequence ID" value="ACT12127.1"/>
    <property type="molecule type" value="Genomic_DNA"/>
</dbReference>
<dbReference type="RefSeq" id="WP_014914551.1">
    <property type="nucleotide sequence ID" value="NC_012917.1"/>
</dbReference>
<dbReference type="SMR" id="C6DB85"/>
<dbReference type="STRING" id="561230.PC1_1078"/>
<dbReference type="GeneID" id="90762503"/>
<dbReference type="KEGG" id="pct:PC1_1078"/>
<dbReference type="eggNOG" id="COG0353">
    <property type="taxonomic scope" value="Bacteria"/>
</dbReference>
<dbReference type="HOGENOM" id="CLU_060739_1_2_6"/>
<dbReference type="OrthoDB" id="9802672at2"/>
<dbReference type="Proteomes" id="UP000002736">
    <property type="component" value="Chromosome"/>
</dbReference>
<dbReference type="GO" id="GO:0003677">
    <property type="term" value="F:DNA binding"/>
    <property type="evidence" value="ECO:0007669"/>
    <property type="project" value="UniProtKB-UniRule"/>
</dbReference>
<dbReference type="GO" id="GO:0008270">
    <property type="term" value="F:zinc ion binding"/>
    <property type="evidence" value="ECO:0007669"/>
    <property type="project" value="UniProtKB-KW"/>
</dbReference>
<dbReference type="GO" id="GO:0006310">
    <property type="term" value="P:DNA recombination"/>
    <property type="evidence" value="ECO:0007669"/>
    <property type="project" value="UniProtKB-UniRule"/>
</dbReference>
<dbReference type="GO" id="GO:0006281">
    <property type="term" value="P:DNA repair"/>
    <property type="evidence" value="ECO:0007669"/>
    <property type="project" value="UniProtKB-UniRule"/>
</dbReference>
<dbReference type="CDD" id="cd01025">
    <property type="entry name" value="TOPRIM_recR"/>
    <property type="match status" value="1"/>
</dbReference>
<dbReference type="FunFam" id="1.10.8.420:FF:000001">
    <property type="entry name" value="Recombination protein RecR"/>
    <property type="match status" value="1"/>
</dbReference>
<dbReference type="FunFam" id="3.40.1360.10:FF:000001">
    <property type="entry name" value="Recombination protein RecR"/>
    <property type="match status" value="1"/>
</dbReference>
<dbReference type="Gene3D" id="3.30.60.80">
    <property type="match status" value="1"/>
</dbReference>
<dbReference type="Gene3D" id="3.40.1360.10">
    <property type="match status" value="1"/>
</dbReference>
<dbReference type="Gene3D" id="6.10.250.240">
    <property type="match status" value="1"/>
</dbReference>
<dbReference type="Gene3D" id="1.10.8.420">
    <property type="entry name" value="RecR Domain 1"/>
    <property type="match status" value="1"/>
</dbReference>
<dbReference type="HAMAP" id="MF_00017">
    <property type="entry name" value="RecR"/>
    <property type="match status" value="1"/>
</dbReference>
<dbReference type="InterPro" id="IPR000093">
    <property type="entry name" value="DNA_Rcmb_RecR"/>
</dbReference>
<dbReference type="InterPro" id="IPR023627">
    <property type="entry name" value="Rcmb_RecR"/>
</dbReference>
<dbReference type="InterPro" id="IPR015967">
    <property type="entry name" value="Rcmb_RecR_Znf"/>
</dbReference>
<dbReference type="InterPro" id="IPR006171">
    <property type="entry name" value="TOPRIM_dom"/>
</dbReference>
<dbReference type="InterPro" id="IPR034137">
    <property type="entry name" value="TOPRIM_RecR"/>
</dbReference>
<dbReference type="NCBIfam" id="TIGR00615">
    <property type="entry name" value="recR"/>
    <property type="match status" value="1"/>
</dbReference>
<dbReference type="PANTHER" id="PTHR30446">
    <property type="entry name" value="RECOMBINATION PROTEIN RECR"/>
    <property type="match status" value="1"/>
</dbReference>
<dbReference type="PANTHER" id="PTHR30446:SF0">
    <property type="entry name" value="RECOMBINATION PROTEIN RECR"/>
    <property type="match status" value="1"/>
</dbReference>
<dbReference type="Pfam" id="PF21175">
    <property type="entry name" value="RecR_C"/>
    <property type="match status" value="1"/>
</dbReference>
<dbReference type="Pfam" id="PF21176">
    <property type="entry name" value="RecR_HhH"/>
    <property type="match status" value="1"/>
</dbReference>
<dbReference type="Pfam" id="PF02132">
    <property type="entry name" value="RecR_ZnF"/>
    <property type="match status" value="1"/>
</dbReference>
<dbReference type="Pfam" id="PF13662">
    <property type="entry name" value="Toprim_4"/>
    <property type="match status" value="1"/>
</dbReference>
<dbReference type="SMART" id="SM00493">
    <property type="entry name" value="TOPRIM"/>
    <property type="match status" value="1"/>
</dbReference>
<dbReference type="SUPFAM" id="SSF111304">
    <property type="entry name" value="Recombination protein RecR"/>
    <property type="match status" value="1"/>
</dbReference>
<dbReference type="PROSITE" id="PS01300">
    <property type="entry name" value="RECR"/>
    <property type="match status" value="1"/>
</dbReference>
<dbReference type="PROSITE" id="PS50880">
    <property type="entry name" value="TOPRIM"/>
    <property type="match status" value="1"/>
</dbReference>
<protein>
    <recommendedName>
        <fullName evidence="1">Recombination protein RecR</fullName>
    </recommendedName>
</protein>
<feature type="chain" id="PRO_1000201867" description="Recombination protein RecR">
    <location>
        <begin position="1"/>
        <end position="201"/>
    </location>
</feature>
<feature type="domain" description="Toprim" evidence="1">
    <location>
        <begin position="81"/>
        <end position="176"/>
    </location>
</feature>
<feature type="zinc finger region" description="C4-type" evidence="1">
    <location>
        <begin position="57"/>
        <end position="72"/>
    </location>
</feature>